<comment type="function">
    <text evidence="1">Acyltransferase that catalyzes the formation of ester bonds between fatty alcohols and fatty acyl-CoAs to form wax monoesters (By similarity). Shows a strong preference for decyl alcohol (C10), with less activity towards C16 and C18 alcohols (By similarity). Shows a strong preference for saturated acyl-CoAs (By similarity).</text>
</comment>
<comment type="catalytic activity">
    <reaction evidence="1">
        <text>a long chain fatty alcohol + a fatty acyl-CoA = a wax ester + CoA</text>
        <dbReference type="Rhea" id="RHEA:38443"/>
        <dbReference type="ChEBI" id="CHEBI:10036"/>
        <dbReference type="ChEBI" id="CHEBI:17135"/>
        <dbReference type="ChEBI" id="CHEBI:57287"/>
        <dbReference type="ChEBI" id="CHEBI:77636"/>
        <dbReference type="EC" id="2.3.1.75"/>
    </reaction>
    <physiologicalReaction direction="left-to-right" evidence="1">
        <dbReference type="Rhea" id="RHEA:38444"/>
    </physiologicalReaction>
</comment>
<comment type="catalytic activity">
    <reaction evidence="1">
        <text>1,2-di-(9Z-octadecenoyl)-sn-glycerol + (9Z)-octadecenoyl-CoA = 1,2,3-tri-(9Z-octadecenoyl)-glycerol + CoA</text>
        <dbReference type="Rhea" id="RHEA:38219"/>
        <dbReference type="ChEBI" id="CHEBI:52333"/>
        <dbReference type="ChEBI" id="CHEBI:53753"/>
        <dbReference type="ChEBI" id="CHEBI:57287"/>
        <dbReference type="ChEBI" id="CHEBI:57387"/>
    </reaction>
    <physiologicalReaction direction="left-to-right" evidence="1">
        <dbReference type="Rhea" id="RHEA:38220"/>
    </physiologicalReaction>
</comment>
<comment type="catalytic activity">
    <reaction evidence="1">
        <text>hexadecan-1-ol + (9Z)-octadecenoyl-CoA = hexadecanyl (9Z)-octadecenoate + CoA</text>
        <dbReference type="Rhea" id="RHEA:38227"/>
        <dbReference type="ChEBI" id="CHEBI:16125"/>
        <dbReference type="ChEBI" id="CHEBI:57287"/>
        <dbReference type="ChEBI" id="CHEBI:57387"/>
        <dbReference type="ChEBI" id="CHEBI:75622"/>
    </reaction>
    <physiologicalReaction direction="left-to-right" evidence="1">
        <dbReference type="Rhea" id="RHEA:38228"/>
    </physiologicalReaction>
</comment>
<comment type="catalytic activity">
    <reaction evidence="1">
        <text>decan-1-ol + (9Z)-octadecenoyl-CoA = 1-O-decyl-(9Z)-octadecenoate + CoA</text>
        <dbReference type="Rhea" id="RHEA:38223"/>
        <dbReference type="ChEBI" id="CHEBI:28903"/>
        <dbReference type="ChEBI" id="CHEBI:57287"/>
        <dbReference type="ChEBI" id="CHEBI:57387"/>
        <dbReference type="ChEBI" id="CHEBI:75620"/>
    </reaction>
    <physiologicalReaction direction="left-to-right" evidence="1">
        <dbReference type="Rhea" id="RHEA:38224"/>
    </physiologicalReaction>
</comment>
<comment type="catalytic activity">
    <reaction evidence="1">
        <text>(9Z)-hexadecen-1-ol + (9Z)-octadecenoyl-CoA = 1-O-(9Z)-hexadecenyl (9Z)-octadecenoate + CoA</text>
        <dbReference type="Rhea" id="RHEA:38231"/>
        <dbReference type="ChEBI" id="CHEBI:57287"/>
        <dbReference type="ChEBI" id="CHEBI:57387"/>
        <dbReference type="ChEBI" id="CHEBI:75623"/>
        <dbReference type="ChEBI" id="CHEBI:75624"/>
    </reaction>
    <physiologicalReaction direction="left-to-right" evidence="1">
        <dbReference type="Rhea" id="RHEA:38232"/>
    </physiologicalReaction>
</comment>
<comment type="catalytic activity">
    <reaction evidence="1">
        <text>octadecan-1-ol + (9Z)-octadecenoyl-CoA = 1-O-octadecyl (9Z)-octadecenoate + CoA</text>
        <dbReference type="Rhea" id="RHEA:38235"/>
        <dbReference type="ChEBI" id="CHEBI:32154"/>
        <dbReference type="ChEBI" id="CHEBI:57287"/>
        <dbReference type="ChEBI" id="CHEBI:57387"/>
        <dbReference type="ChEBI" id="CHEBI:75625"/>
    </reaction>
    <physiologicalReaction direction="left-to-right" evidence="1">
        <dbReference type="Rhea" id="RHEA:38236"/>
    </physiologicalReaction>
</comment>
<comment type="catalytic activity">
    <reaction evidence="1">
        <text>(9Z)-octadecen-1-ol + (9Z)-octadecenoyl-CoA = 1-O-(9Z)-octadecenyl (9Z)-octadecenoate + CoA</text>
        <dbReference type="Rhea" id="RHEA:38239"/>
        <dbReference type="ChEBI" id="CHEBI:57287"/>
        <dbReference type="ChEBI" id="CHEBI:57387"/>
        <dbReference type="ChEBI" id="CHEBI:73504"/>
        <dbReference type="ChEBI" id="CHEBI:75626"/>
    </reaction>
    <physiologicalReaction direction="left-to-right" evidence="1">
        <dbReference type="Rhea" id="RHEA:38240"/>
    </physiologicalReaction>
</comment>
<comment type="catalytic activity">
    <reaction evidence="1">
        <text>hexadecan-1-ol + hexadecanoyl-CoA = hexadecanyl hexadecanoate + CoA</text>
        <dbReference type="Rhea" id="RHEA:38167"/>
        <dbReference type="ChEBI" id="CHEBI:16125"/>
        <dbReference type="ChEBI" id="CHEBI:57287"/>
        <dbReference type="ChEBI" id="CHEBI:57379"/>
        <dbReference type="ChEBI" id="CHEBI:75584"/>
    </reaction>
    <physiologicalReaction direction="left-to-right" evidence="1">
        <dbReference type="Rhea" id="RHEA:38168"/>
    </physiologicalReaction>
</comment>
<comment type="catalytic activity">
    <reaction evidence="1">
        <text>hexadecan-1-ol + (9Z)-hexadecenoyl-CoA = 1-O-hexadecyl (9Z)-hexadecenoate + CoA</text>
        <dbReference type="Rhea" id="RHEA:38247"/>
        <dbReference type="ChEBI" id="CHEBI:16125"/>
        <dbReference type="ChEBI" id="CHEBI:57287"/>
        <dbReference type="ChEBI" id="CHEBI:61540"/>
        <dbReference type="ChEBI" id="CHEBI:75629"/>
    </reaction>
    <physiologicalReaction direction="left-to-right" evidence="1">
        <dbReference type="Rhea" id="RHEA:38248"/>
    </physiologicalReaction>
</comment>
<comment type="catalytic activity">
    <reaction evidence="1">
        <text>hexadecan-1-ol + octadecanoyl-CoA = hexadecanyl octadecanoate + CoA</text>
        <dbReference type="Rhea" id="RHEA:38251"/>
        <dbReference type="ChEBI" id="CHEBI:16125"/>
        <dbReference type="ChEBI" id="CHEBI:57287"/>
        <dbReference type="ChEBI" id="CHEBI:57394"/>
        <dbReference type="ChEBI" id="CHEBI:75631"/>
    </reaction>
    <physiologicalReaction direction="left-to-right" evidence="1">
        <dbReference type="Rhea" id="RHEA:38252"/>
    </physiologicalReaction>
</comment>
<comment type="catalytic activity">
    <reaction evidence="1">
        <text>eicosan-1-ol + (9Z)-octadecenoyl-CoA = 1-O-eicosanyl (9Z)-octadecenoate + CoA</text>
        <dbReference type="Rhea" id="RHEA:38243"/>
        <dbReference type="ChEBI" id="CHEBI:57287"/>
        <dbReference type="ChEBI" id="CHEBI:57387"/>
        <dbReference type="ChEBI" id="CHEBI:75627"/>
        <dbReference type="ChEBI" id="CHEBI:75628"/>
    </reaction>
    <physiologicalReaction direction="left-to-right" evidence="1">
        <dbReference type="Rhea" id="RHEA:38244"/>
    </physiologicalReaction>
</comment>
<comment type="subcellular location">
    <subcellularLocation>
        <location evidence="2">Endoplasmic reticulum membrane</location>
        <topology evidence="3">Multi-pass membrane protein</topology>
    </subcellularLocation>
</comment>
<comment type="similarity">
    <text evidence="4">Belongs to the diacylglycerol acyltransferase family.</text>
</comment>
<name>AWAT1_MOUSE</name>
<proteinExistence type="evidence at transcript level"/>
<evidence type="ECO:0000250" key="1">
    <source>
        <dbReference type="UniProtKB" id="Q58HT5"/>
    </source>
</evidence>
<evidence type="ECO:0000250" key="2">
    <source>
        <dbReference type="UniProtKB" id="Q6E213"/>
    </source>
</evidence>
<evidence type="ECO:0000255" key="3"/>
<evidence type="ECO:0000305" key="4"/>
<accession>A2ADU9</accession>
<accession>B2RW94</accession>
<dbReference type="EC" id="2.3.1.75" evidence="1"/>
<dbReference type="EMBL" id="AL671299">
    <property type="status" value="NOT_ANNOTATED_CDS"/>
    <property type="molecule type" value="Genomic_DNA"/>
</dbReference>
<dbReference type="EMBL" id="BC147680">
    <property type="protein sequence ID" value="AAI47681.1"/>
    <property type="molecule type" value="mRNA"/>
</dbReference>
<dbReference type="EMBL" id="BC147683">
    <property type="protein sequence ID" value="AAI47684.1"/>
    <property type="molecule type" value="mRNA"/>
</dbReference>
<dbReference type="EMBL" id="BC147829">
    <property type="protein sequence ID" value="AAI47830.1"/>
    <property type="molecule type" value="mRNA"/>
</dbReference>
<dbReference type="EMBL" id="BC147832">
    <property type="protein sequence ID" value="AAI47833.1"/>
    <property type="molecule type" value="mRNA"/>
</dbReference>
<dbReference type="CCDS" id="CCDS41074.1"/>
<dbReference type="RefSeq" id="NP_001074605.1">
    <property type="nucleotide sequence ID" value="NM_001081136.1"/>
</dbReference>
<dbReference type="BioGRID" id="232791">
    <property type="interactions" value="1"/>
</dbReference>
<dbReference type="FunCoup" id="A2ADU9">
    <property type="interactions" value="109"/>
</dbReference>
<dbReference type="STRING" id="10090.ENSMUSP00000094088"/>
<dbReference type="PaxDb" id="10090-ENSMUSP00000094088"/>
<dbReference type="ProteomicsDB" id="265184"/>
<dbReference type="Antibodypedia" id="27356">
    <property type="antibodies" value="96 antibodies from 20 providers"/>
</dbReference>
<dbReference type="Ensembl" id="ENSMUST00000096361.5">
    <property type="protein sequence ID" value="ENSMUSP00000094088.5"/>
    <property type="gene ID" value="ENSMUSG00000015665.9"/>
</dbReference>
<dbReference type="GeneID" id="245533"/>
<dbReference type="KEGG" id="mmu:245533"/>
<dbReference type="UCSC" id="uc009twb.1">
    <property type="organism name" value="mouse"/>
</dbReference>
<dbReference type="AGR" id="MGI:3588200"/>
<dbReference type="CTD" id="158833"/>
<dbReference type="MGI" id="MGI:3588200">
    <property type="gene designation" value="Awat1"/>
</dbReference>
<dbReference type="VEuPathDB" id="HostDB:ENSMUSG00000015665"/>
<dbReference type="eggNOG" id="KOG0831">
    <property type="taxonomic scope" value="Eukaryota"/>
</dbReference>
<dbReference type="GeneTree" id="ENSGT01030000234582"/>
<dbReference type="HOGENOM" id="CLU_023995_0_0_1"/>
<dbReference type="InParanoid" id="A2ADU9"/>
<dbReference type="OMA" id="FYCCVFY"/>
<dbReference type="OrthoDB" id="264532at2759"/>
<dbReference type="PhylomeDB" id="A2ADU9"/>
<dbReference type="TreeFam" id="TF314707"/>
<dbReference type="BRENDA" id="2.3.1.75">
    <property type="organism ID" value="3474"/>
</dbReference>
<dbReference type="Reactome" id="R-MMU-2142753">
    <property type="pathway name" value="Arachidonate metabolism"/>
</dbReference>
<dbReference type="Reactome" id="R-MMU-9640463">
    <property type="pathway name" value="Wax biosynthesis"/>
</dbReference>
<dbReference type="BioGRID-ORCS" id="245533">
    <property type="hits" value="0 hits in 79 CRISPR screens"/>
</dbReference>
<dbReference type="PRO" id="PR:A2ADU9"/>
<dbReference type="Proteomes" id="UP000000589">
    <property type="component" value="Chromosome X"/>
</dbReference>
<dbReference type="RNAct" id="A2ADU9">
    <property type="molecule type" value="protein"/>
</dbReference>
<dbReference type="Bgee" id="ENSMUSG00000015665">
    <property type="expression patterns" value="Expressed in lip and 2 other cell types or tissues"/>
</dbReference>
<dbReference type="GO" id="GO:0005789">
    <property type="term" value="C:endoplasmic reticulum membrane"/>
    <property type="evidence" value="ECO:0007669"/>
    <property type="project" value="UniProtKB-SubCell"/>
</dbReference>
<dbReference type="GO" id="GO:0047196">
    <property type="term" value="F:long-chain-alcohol O-fatty-acyltransferase activity"/>
    <property type="evidence" value="ECO:0007669"/>
    <property type="project" value="UniProtKB-EC"/>
</dbReference>
<dbReference type="GO" id="GO:0006629">
    <property type="term" value="P:lipid metabolic process"/>
    <property type="evidence" value="ECO:0007669"/>
    <property type="project" value="UniProtKB-KW"/>
</dbReference>
<dbReference type="CDD" id="cd07987">
    <property type="entry name" value="LPLAT_MGAT-like"/>
    <property type="match status" value="1"/>
</dbReference>
<dbReference type="InterPro" id="IPR007130">
    <property type="entry name" value="DAGAT"/>
</dbReference>
<dbReference type="PANTHER" id="PTHR12317:SF16">
    <property type="entry name" value="ACYL-COA WAX ALCOHOL ACYLTRANSFERASE 1"/>
    <property type="match status" value="1"/>
</dbReference>
<dbReference type="PANTHER" id="PTHR12317">
    <property type="entry name" value="DIACYLGLYCEROL O-ACYLTRANSFERASE"/>
    <property type="match status" value="1"/>
</dbReference>
<dbReference type="Pfam" id="PF03982">
    <property type="entry name" value="DAGAT"/>
    <property type="match status" value="1"/>
</dbReference>
<feature type="chain" id="PRO_0000320296" description="Acyl-CoA wax alcohol acyltransferase 1">
    <location>
        <begin position="1"/>
        <end position="328"/>
    </location>
</feature>
<feature type="transmembrane region" description="Helical" evidence="3">
    <location>
        <begin position="12"/>
        <end position="32"/>
    </location>
</feature>
<feature type="transmembrane region" description="Helical" evidence="3">
    <location>
        <begin position="34"/>
        <end position="53"/>
    </location>
</feature>
<reference key="1">
    <citation type="journal article" date="2009" name="PLoS Biol.">
        <title>Lineage-specific biology revealed by a finished genome assembly of the mouse.</title>
        <authorList>
            <person name="Church D.M."/>
            <person name="Goodstadt L."/>
            <person name="Hillier L.W."/>
            <person name="Zody M.C."/>
            <person name="Goldstein S."/>
            <person name="She X."/>
            <person name="Bult C.J."/>
            <person name="Agarwala R."/>
            <person name="Cherry J.L."/>
            <person name="DiCuccio M."/>
            <person name="Hlavina W."/>
            <person name="Kapustin Y."/>
            <person name="Meric P."/>
            <person name="Maglott D."/>
            <person name="Birtle Z."/>
            <person name="Marques A.C."/>
            <person name="Graves T."/>
            <person name="Zhou S."/>
            <person name="Teague B."/>
            <person name="Potamousis K."/>
            <person name="Churas C."/>
            <person name="Place M."/>
            <person name="Herschleb J."/>
            <person name="Runnheim R."/>
            <person name="Forrest D."/>
            <person name="Amos-Landgraf J."/>
            <person name="Schwartz D.C."/>
            <person name="Cheng Z."/>
            <person name="Lindblad-Toh K."/>
            <person name="Eichler E.E."/>
            <person name="Ponting C.P."/>
        </authorList>
    </citation>
    <scope>NUCLEOTIDE SEQUENCE [LARGE SCALE GENOMIC DNA]</scope>
    <source>
        <strain>C57BL/6J</strain>
    </source>
</reference>
<reference key="2">
    <citation type="journal article" date="2004" name="Genome Res.">
        <title>The status, quality, and expansion of the NIH full-length cDNA project: the Mammalian Gene Collection (MGC).</title>
        <authorList>
            <consortium name="The MGC Project Team"/>
        </authorList>
    </citation>
    <scope>NUCLEOTIDE SEQUENCE [LARGE SCALE MRNA]</scope>
    <source>
        <tissue>Brain</tissue>
    </source>
</reference>
<sequence length="328" mass="37573">MSCSMKTEHLQSLSLLQWPLSYVAMFWIVQPLLICLLFTPLWPLPTVYFVWLLLDWKTPDKGGRRSDWVRNWNVWNHIRDYFPITILKTKDLSPSENYIMGVHPHGLLTFGAFCNFCTEATGFSKTFPGITPHLATLSWFFKIPIIRDYIMAKGLCSVSQASIDYLLSHGTGNLVGIVVGGVGEALQSVPNTTTLLLKKRKGFVRTALQHGAHLVPTFTFGETEVYDQVLFHEDSRMFKFQSLFRRIFGFYCCVFYGQGFHQDCKGLLPYHKPIITVVGEALPLPQVKNPSPEIVDKYHALYMDALYKLFEQHKVQYGCSNTQKLIFL</sequence>
<gene>
    <name type="primary">Awat1</name>
    <name type="synonym">Dgat2l3</name>
</gene>
<protein>
    <recommendedName>
        <fullName>Acyl-CoA wax alcohol acyltransferase 1</fullName>
        <ecNumber evidence="1">2.3.1.75</ecNumber>
    </recommendedName>
    <alternativeName>
        <fullName>Diacylglycerol O-acyltransferase 2-like protein 3</fullName>
    </alternativeName>
    <alternativeName>
        <fullName>Long-chain-alcohol O-fatty-acyltransferase 1</fullName>
    </alternativeName>
</protein>
<keyword id="KW-0012">Acyltransferase</keyword>
<keyword id="KW-0256">Endoplasmic reticulum</keyword>
<keyword id="KW-0444">Lipid biosynthesis</keyword>
<keyword id="KW-0443">Lipid metabolism</keyword>
<keyword id="KW-0472">Membrane</keyword>
<keyword id="KW-1185">Reference proteome</keyword>
<keyword id="KW-0808">Transferase</keyword>
<keyword id="KW-0812">Transmembrane</keyword>
<keyword id="KW-1133">Transmembrane helix</keyword>
<organism>
    <name type="scientific">Mus musculus</name>
    <name type="common">Mouse</name>
    <dbReference type="NCBI Taxonomy" id="10090"/>
    <lineage>
        <taxon>Eukaryota</taxon>
        <taxon>Metazoa</taxon>
        <taxon>Chordata</taxon>
        <taxon>Craniata</taxon>
        <taxon>Vertebrata</taxon>
        <taxon>Euteleostomi</taxon>
        <taxon>Mammalia</taxon>
        <taxon>Eutheria</taxon>
        <taxon>Euarchontoglires</taxon>
        <taxon>Glires</taxon>
        <taxon>Rodentia</taxon>
        <taxon>Myomorpha</taxon>
        <taxon>Muroidea</taxon>
        <taxon>Muridae</taxon>
        <taxon>Murinae</taxon>
        <taxon>Mus</taxon>
        <taxon>Mus</taxon>
    </lineage>
</organism>